<keyword id="KW-0028">Amino-acid biosynthesis</keyword>
<keyword id="KW-0963">Cytoplasm</keyword>
<keyword id="KW-0220">Diaminopimelate biosynthesis</keyword>
<keyword id="KW-0457">Lysine biosynthesis</keyword>
<keyword id="KW-0520">NAD</keyword>
<keyword id="KW-0521">NADP</keyword>
<keyword id="KW-0560">Oxidoreductase</keyword>
<accession>B6J2F3</accession>
<proteinExistence type="inferred from homology"/>
<organism>
    <name type="scientific">Coxiella burnetii (strain CbuG_Q212)</name>
    <name type="common">Coxiella burnetii (strain Q212)</name>
    <dbReference type="NCBI Taxonomy" id="434923"/>
    <lineage>
        <taxon>Bacteria</taxon>
        <taxon>Pseudomonadati</taxon>
        <taxon>Pseudomonadota</taxon>
        <taxon>Gammaproteobacteria</taxon>
        <taxon>Legionellales</taxon>
        <taxon>Coxiellaceae</taxon>
        <taxon>Coxiella</taxon>
    </lineage>
</organism>
<feature type="chain" id="PRO_1000093962" description="4-hydroxy-tetrahydrodipicolinate reductase">
    <location>
        <begin position="1"/>
        <end position="239"/>
    </location>
</feature>
<feature type="active site" description="Proton donor/acceptor" evidence="1">
    <location>
        <position position="134"/>
    </location>
</feature>
<feature type="active site" description="Proton donor" evidence="1">
    <location>
        <position position="138"/>
    </location>
</feature>
<feature type="binding site" evidence="1">
    <location>
        <begin position="9"/>
        <end position="14"/>
    </location>
    <ligand>
        <name>NAD(+)</name>
        <dbReference type="ChEBI" id="CHEBI:57540"/>
    </ligand>
</feature>
<feature type="binding site" evidence="1">
    <location>
        <begin position="78"/>
        <end position="80"/>
    </location>
    <ligand>
        <name>NAD(+)</name>
        <dbReference type="ChEBI" id="CHEBI:57540"/>
    </ligand>
</feature>
<feature type="binding site" evidence="1">
    <location>
        <begin position="104"/>
        <end position="107"/>
    </location>
    <ligand>
        <name>NAD(+)</name>
        <dbReference type="ChEBI" id="CHEBI:57540"/>
    </ligand>
</feature>
<feature type="binding site" evidence="1">
    <location>
        <position position="135"/>
    </location>
    <ligand>
        <name>(S)-2,3,4,5-tetrahydrodipicolinate</name>
        <dbReference type="ChEBI" id="CHEBI:16845"/>
    </ligand>
</feature>
<feature type="binding site" evidence="1">
    <location>
        <begin position="144"/>
        <end position="145"/>
    </location>
    <ligand>
        <name>(S)-2,3,4,5-tetrahydrodipicolinate</name>
        <dbReference type="ChEBI" id="CHEBI:16845"/>
    </ligand>
</feature>
<sequence>MAINVIINGINGKIGRVVKENITAQSDLELVSGTGRQDDLAKTIQTTHADVVIDFTTPQSVFHNAEIIIQSGARPVIGTTGLTLEQIALLDKQCRNKKLGAIVAPNFSVGAVLMMKYAKEAAHYFPDVEIIEMHHSQKIDAPSGTAIKTAQMIGEMRSSKKDEPFKDRARGEIKNGIPIHSIRLPGLFSHQSVIFGSNGETLTIRHDGMDRNCTMPGIFMACRKVMELDYLVYGLENLL</sequence>
<dbReference type="EC" id="1.17.1.8" evidence="1"/>
<dbReference type="EMBL" id="CP001019">
    <property type="protein sequence ID" value="ACJ17527.1"/>
    <property type="molecule type" value="Genomic_DNA"/>
</dbReference>
<dbReference type="RefSeq" id="WP_012569572.1">
    <property type="nucleotide sequence ID" value="NC_011527.1"/>
</dbReference>
<dbReference type="SMR" id="B6J2F3"/>
<dbReference type="KEGG" id="cbg:CbuG_0069"/>
<dbReference type="HOGENOM" id="CLU_047479_0_1_6"/>
<dbReference type="UniPathway" id="UPA00034">
    <property type="reaction ID" value="UER00018"/>
</dbReference>
<dbReference type="GO" id="GO:0005829">
    <property type="term" value="C:cytosol"/>
    <property type="evidence" value="ECO:0007669"/>
    <property type="project" value="TreeGrafter"/>
</dbReference>
<dbReference type="GO" id="GO:0008839">
    <property type="term" value="F:4-hydroxy-tetrahydrodipicolinate reductase"/>
    <property type="evidence" value="ECO:0007669"/>
    <property type="project" value="UniProtKB-EC"/>
</dbReference>
<dbReference type="GO" id="GO:0051287">
    <property type="term" value="F:NAD binding"/>
    <property type="evidence" value="ECO:0007669"/>
    <property type="project" value="UniProtKB-UniRule"/>
</dbReference>
<dbReference type="GO" id="GO:0050661">
    <property type="term" value="F:NADP binding"/>
    <property type="evidence" value="ECO:0007669"/>
    <property type="project" value="UniProtKB-UniRule"/>
</dbReference>
<dbReference type="GO" id="GO:0016726">
    <property type="term" value="F:oxidoreductase activity, acting on CH or CH2 groups, NAD or NADP as acceptor"/>
    <property type="evidence" value="ECO:0007669"/>
    <property type="project" value="UniProtKB-UniRule"/>
</dbReference>
<dbReference type="GO" id="GO:0019877">
    <property type="term" value="P:diaminopimelate biosynthetic process"/>
    <property type="evidence" value="ECO:0007669"/>
    <property type="project" value="UniProtKB-UniRule"/>
</dbReference>
<dbReference type="GO" id="GO:0009089">
    <property type="term" value="P:lysine biosynthetic process via diaminopimelate"/>
    <property type="evidence" value="ECO:0007669"/>
    <property type="project" value="UniProtKB-UniRule"/>
</dbReference>
<dbReference type="CDD" id="cd02274">
    <property type="entry name" value="DHDPR_N"/>
    <property type="match status" value="1"/>
</dbReference>
<dbReference type="FunFam" id="3.30.360.10:FF:000009">
    <property type="entry name" value="4-hydroxy-tetrahydrodipicolinate reductase"/>
    <property type="match status" value="1"/>
</dbReference>
<dbReference type="Gene3D" id="3.30.360.10">
    <property type="entry name" value="Dihydrodipicolinate Reductase, domain 2"/>
    <property type="match status" value="1"/>
</dbReference>
<dbReference type="Gene3D" id="3.40.50.720">
    <property type="entry name" value="NAD(P)-binding Rossmann-like Domain"/>
    <property type="match status" value="1"/>
</dbReference>
<dbReference type="HAMAP" id="MF_00102">
    <property type="entry name" value="DapB"/>
    <property type="match status" value="1"/>
</dbReference>
<dbReference type="InterPro" id="IPR022663">
    <property type="entry name" value="DapB_C"/>
</dbReference>
<dbReference type="InterPro" id="IPR000846">
    <property type="entry name" value="DapB_N"/>
</dbReference>
<dbReference type="InterPro" id="IPR022664">
    <property type="entry name" value="DapB_N_CS"/>
</dbReference>
<dbReference type="InterPro" id="IPR023940">
    <property type="entry name" value="DHDPR_bac"/>
</dbReference>
<dbReference type="InterPro" id="IPR036291">
    <property type="entry name" value="NAD(P)-bd_dom_sf"/>
</dbReference>
<dbReference type="NCBIfam" id="TIGR00036">
    <property type="entry name" value="dapB"/>
    <property type="match status" value="1"/>
</dbReference>
<dbReference type="PANTHER" id="PTHR20836:SF0">
    <property type="entry name" value="4-HYDROXY-TETRAHYDRODIPICOLINATE REDUCTASE 1, CHLOROPLASTIC-RELATED"/>
    <property type="match status" value="1"/>
</dbReference>
<dbReference type="PANTHER" id="PTHR20836">
    <property type="entry name" value="DIHYDRODIPICOLINATE REDUCTASE"/>
    <property type="match status" value="1"/>
</dbReference>
<dbReference type="Pfam" id="PF05173">
    <property type="entry name" value="DapB_C"/>
    <property type="match status" value="1"/>
</dbReference>
<dbReference type="Pfam" id="PF01113">
    <property type="entry name" value="DapB_N"/>
    <property type="match status" value="1"/>
</dbReference>
<dbReference type="PIRSF" id="PIRSF000161">
    <property type="entry name" value="DHPR"/>
    <property type="match status" value="1"/>
</dbReference>
<dbReference type="SUPFAM" id="SSF55347">
    <property type="entry name" value="Glyceraldehyde-3-phosphate dehydrogenase-like, C-terminal domain"/>
    <property type="match status" value="1"/>
</dbReference>
<dbReference type="SUPFAM" id="SSF51735">
    <property type="entry name" value="NAD(P)-binding Rossmann-fold domains"/>
    <property type="match status" value="1"/>
</dbReference>
<dbReference type="PROSITE" id="PS01298">
    <property type="entry name" value="DAPB"/>
    <property type="match status" value="1"/>
</dbReference>
<comment type="function">
    <text evidence="1">Catalyzes the conversion of 4-hydroxy-tetrahydrodipicolinate (HTPA) to tetrahydrodipicolinate.</text>
</comment>
<comment type="catalytic activity">
    <reaction evidence="1">
        <text>(S)-2,3,4,5-tetrahydrodipicolinate + NAD(+) + H2O = (2S,4S)-4-hydroxy-2,3,4,5-tetrahydrodipicolinate + NADH + H(+)</text>
        <dbReference type="Rhea" id="RHEA:35323"/>
        <dbReference type="ChEBI" id="CHEBI:15377"/>
        <dbReference type="ChEBI" id="CHEBI:15378"/>
        <dbReference type="ChEBI" id="CHEBI:16845"/>
        <dbReference type="ChEBI" id="CHEBI:57540"/>
        <dbReference type="ChEBI" id="CHEBI:57945"/>
        <dbReference type="ChEBI" id="CHEBI:67139"/>
        <dbReference type="EC" id="1.17.1.8"/>
    </reaction>
</comment>
<comment type="catalytic activity">
    <reaction evidence="1">
        <text>(S)-2,3,4,5-tetrahydrodipicolinate + NADP(+) + H2O = (2S,4S)-4-hydroxy-2,3,4,5-tetrahydrodipicolinate + NADPH + H(+)</text>
        <dbReference type="Rhea" id="RHEA:35331"/>
        <dbReference type="ChEBI" id="CHEBI:15377"/>
        <dbReference type="ChEBI" id="CHEBI:15378"/>
        <dbReference type="ChEBI" id="CHEBI:16845"/>
        <dbReference type="ChEBI" id="CHEBI:57783"/>
        <dbReference type="ChEBI" id="CHEBI:58349"/>
        <dbReference type="ChEBI" id="CHEBI:67139"/>
        <dbReference type="EC" id="1.17.1.8"/>
    </reaction>
</comment>
<comment type="pathway">
    <text evidence="1">Amino-acid biosynthesis; L-lysine biosynthesis via DAP pathway; (S)-tetrahydrodipicolinate from L-aspartate: step 4/4.</text>
</comment>
<comment type="subcellular location">
    <subcellularLocation>
        <location evidence="1">Cytoplasm</location>
    </subcellularLocation>
</comment>
<comment type="similarity">
    <text evidence="1">Belongs to the DapB family.</text>
</comment>
<comment type="caution">
    <text evidence="2">Was originally thought to be a dihydrodipicolinate reductase (DHDPR), catalyzing the conversion of dihydrodipicolinate to tetrahydrodipicolinate. However, it was shown in E.coli that the substrate of the enzymatic reaction is not dihydrodipicolinate (DHDP) but in fact (2S,4S)-4-hydroxy-2,3,4,5-tetrahydrodipicolinic acid (HTPA), the product released by the DapA-catalyzed reaction.</text>
</comment>
<reference key="1">
    <citation type="journal article" date="2009" name="Infect. Immun.">
        <title>Comparative genomics reveal extensive transposon-mediated genomic plasticity and diversity among potential effector proteins within the genus Coxiella.</title>
        <authorList>
            <person name="Beare P.A."/>
            <person name="Unsworth N."/>
            <person name="Andoh M."/>
            <person name="Voth D.E."/>
            <person name="Omsland A."/>
            <person name="Gilk S.D."/>
            <person name="Williams K.P."/>
            <person name="Sobral B.W."/>
            <person name="Kupko J.J. III"/>
            <person name="Porcella S.F."/>
            <person name="Samuel J.E."/>
            <person name="Heinzen R.A."/>
        </authorList>
    </citation>
    <scope>NUCLEOTIDE SEQUENCE [LARGE SCALE GENOMIC DNA]</scope>
    <source>
        <strain>CbuG_Q212</strain>
    </source>
</reference>
<gene>
    <name evidence="1" type="primary">dapB</name>
    <name type="ordered locus">CbuG_0069</name>
</gene>
<protein>
    <recommendedName>
        <fullName evidence="1">4-hydroxy-tetrahydrodipicolinate reductase</fullName>
        <shortName evidence="1">HTPA reductase</shortName>
        <ecNumber evidence="1">1.17.1.8</ecNumber>
    </recommendedName>
</protein>
<evidence type="ECO:0000255" key="1">
    <source>
        <dbReference type="HAMAP-Rule" id="MF_00102"/>
    </source>
</evidence>
<evidence type="ECO:0000305" key="2"/>
<name>DAPB_COXB2</name>